<sequence>MLWIFWLVFAYFLGSIPFGLFIGKICCNCDIRTEGSKSTGATNVARLCGFKYGVAALVLDVAKGFVPVLMAYQYSHNWIFISLVAAAAVIGHVFSIFMDMKGGKAVATTIGVFLALAPVATFYSIVFLLAVIALSGFVSMGSLTFAVALPFFTLVTGSVGMVPLACGMTVLLFWTHRENIRRLAKGQENSWKKKK</sequence>
<accession>C6BRS7</accession>
<proteinExistence type="inferred from homology"/>
<feature type="chain" id="PRO_1000213405" description="Glycerol-3-phosphate acyltransferase">
    <location>
        <begin position="1"/>
        <end position="195"/>
    </location>
</feature>
<feature type="transmembrane region" description="Helical" evidence="1">
    <location>
        <begin position="2"/>
        <end position="22"/>
    </location>
</feature>
<feature type="transmembrane region" description="Helical" evidence="1">
    <location>
        <begin position="52"/>
        <end position="72"/>
    </location>
</feature>
<feature type="transmembrane region" description="Helical" evidence="1">
    <location>
        <begin position="78"/>
        <end position="98"/>
    </location>
</feature>
<feature type="transmembrane region" description="Helical" evidence="1">
    <location>
        <begin position="112"/>
        <end position="132"/>
    </location>
</feature>
<feature type="transmembrane region" description="Helical" evidence="1">
    <location>
        <begin position="145"/>
        <end position="165"/>
    </location>
</feature>
<dbReference type="EC" id="2.3.1.275" evidence="1"/>
<dbReference type="EMBL" id="CP001649">
    <property type="protein sequence ID" value="ACS79517.1"/>
    <property type="molecule type" value="Genomic_DNA"/>
</dbReference>
<dbReference type="RefSeq" id="WP_015851335.1">
    <property type="nucleotide sequence ID" value="NC_012881.1"/>
</dbReference>
<dbReference type="SMR" id="C6BRS7"/>
<dbReference type="STRING" id="526222.Desal_1455"/>
<dbReference type="KEGG" id="dsa:Desal_1455"/>
<dbReference type="eggNOG" id="COG0344">
    <property type="taxonomic scope" value="Bacteria"/>
</dbReference>
<dbReference type="HOGENOM" id="CLU_081254_7_1_7"/>
<dbReference type="OrthoDB" id="9777124at2"/>
<dbReference type="UniPathway" id="UPA00085"/>
<dbReference type="Proteomes" id="UP000002601">
    <property type="component" value="Chromosome"/>
</dbReference>
<dbReference type="GO" id="GO:0005886">
    <property type="term" value="C:plasma membrane"/>
    <property type="evidence" value="ECO:0007669"/>
    <property type="project" value="UniProtKB-SubCell"/>
</dbReference>
<dbReference type="GO" id="GO:0043772">
    <property type="term" value="F:acyl-phosphate glycerol-3-phosphate acyltransferase activity"/>
    <property type="evidence" value="ECO:0007669"/>
    <property type="project" value="UniProtKB-UniRule"/>
</dbReference>
<dbReference type="GO" id="GO:0008654">
    <property type="term" value="P:phospholipid biosynthetic process"/>
    <property type="evidence" value="ECO:0007669"/>
    <property type="project" value="UniProtKB-UniRule"/>
</dbReference>
<dbReference type="HAMAP" id="MF_01043">
    <property type="entry name" value="PlsY"/>
    <property type="match status" value="1"/>
</dbReference>
<dbReference type="InterPro" id="IPR003811">
    <property type="entry name" value="G3P_acylTferase_PlsY"/>
</dbReference>
<dbReference type="NCBIfam" id="TIGR00023">
    <property type="entry name" value="glycerol-3-phosphate 1-O-acyltransferase PlsY"/>
    <property type="match status" value="1"/>
</dbReference>
<dbReference type="PANTHER" id="PTHR30309:SF0">
    <property type="entry name" value="GLYCEROL-3-PHOSPHATE ACYLTRANSFERASE-RELATED"/>
    <property type="match status" value="1"/>
</dbReference>
<dbReference type="PANTHER" id="PTHR30309">
    <property type="entry name" value="INNER MEMBRANE PROTEIN YGIH"/>
    <property type="match status" value="1"/>
</dbReference>
<dbReference type="Pfam" id="PF02660">
    <property type="entry name" value="G3P_acyltransf"/>
    <property type="match status" value="1"/>
</dbReference>
<dbReference type="SMART" id="SM01207">
    <property type="entry name" value="G3P_acyltransf"/>
    <property type="match status" value="1"/>
</dbReference>
<name>PLSY_MARSD</name>
<keyword id="KW-0997">Cell inner membrane</keyword>
<keyword id="KW-1003">Cell membrane</keyword>
<keyword id="KW-0444">Lipid biosynthesis</keyword>
<keyword id="KW-0443">Lipid metabolism</keyword>
<keyword id="KW-0472">Membrane</keyword>
<keyword id="KW-0594">Phospholipid biosynthesis</keyword>
<keyword id="KW-1208">Phospholipid metabolism</keyword>
<keyword id="KW-1185">Reference proteome</keyword>
<keyword id="KW-0808">Transferase</keyword>
<keyword id="KW-0812">Transmembrane</keyword>
<keyword id="KW-1133">Transmembrane helix</keyword>
<gene>
    <name evidence="1" type="primary">plsY</name>
    <name type="ordered locus">Desal_1455</name>
</gene>
<protein>
    <recommendedName>
        <fullName evidence="1">Glycerol-3-phosphate acyltransferase</fullName>
    </recommendedName>
    <alternativeName>
        <fullName evidence="1">Acyl-PO4 G3P acyltransferase</fullName>
    </alternativeName>
    <alternativeName>
        <fullName evidence="1">Acyl-phosphate--glycerol-3-phosphate acyltransferase</fullName>
    </alternativeName>
    <alternativeName>
        <fullName evidence="1">G3P acyltransferase</fullName>
        <shortName evidence="1">GPAT</shortName>
        <ecNumber evidence="1">2.3.1.275</ecNumber>
    </alternativeName>
    <alternativeName>
        <fullName evidence="1">Lysophosphatidic acid synthase</fullName>
        <shortName evidence="1">LPA synthase</shortName>
    </alternativeName>
</protein>
<organism>
    <name type="scientific">Maridesulfovibrio salexigens (strain ATCC 14822 / DSM 2638 / NCIMB 8403 / VKM B-1763)</name>
    <name type="common">Desulfovibrio salexigens</name>
    <dbReference type="NCBI Taxonomy" id="526222"/>
    <lineage>
        <taxon>Bacteria</taxon>
        <taxon>Pseudomonadati</taxon>
        <taxon>Thermodesulfobacteriota</taxon>
        <taxon>Desulfovibrionia</taxon>
        <taxon>Desulfovibrionales</taxon>
        <taxon>Desulfovibrionaceae</taxon>
        <taxon>Maridesulfovibrio</taxon>
    </lineage>
</organism>
<evidence type="ECO:0000255" key="1">
    <source>
        <dbReference type="HAMAP-Rule" id="MF_01043"/>
    </source>
</evidence>
<reference key="1">
    <citation type="submission" date="2009-06" db="EMBL/GenBank/DDBJ databases">
        <title>Complete sequence of Desulfovibrio salexigens DSM 2638.</title>
        <authorList>
            <consortium name="US DOE Joint Genome Institute"/>
            <person name="Lucas S."/>
            <person name="Copeland A."/>
            <person name="Lapidus A."/>
            <person name="Glavina del Rio T."/>
            <person name="Tice H."/>
            <person name="Bruce D."/>
            <person name="Goodwin L."/>
            <person name="Pitluck S."/>
            <person name="Munk A.C."/>
            <person name="Brettin T."/>
            <person name="Detter J.C."/>
            <person name="Han C."/>
            <person name="Tapia R."/>
            <person name="Larimer F."/>
            <person name="Land M."/>
            <person name="Hauser L."/>
            <person name="Kyrpides N."/>
            <person name="Anderson I."/>
            <person name="Wall J.D."/>
            <person name="Arkin A.P."/>
            <person name="Dehal P."/>
            <person name="Chivian D."/>
            <person name="Giles B."/>
            <person name="Hazen T.C."/>
        </authorList>
    </citation>
    <scope>NUCLEOTIDE SEQUENCE [LARGE SCALE GENOMIC DNA]</scope>
    <source>
        <strain>ATCC 14822 / DSM 2638 / NCIMB 8403 / VKM B-1763</strain>
    </source>
</reference>
<comment type="function">
    <text evidence="1">Catalyzes the transfer of an acyl group from acyl-phosphate (acyl-PO(4)) to glycerol-3-phosphate (G3P) to form lysophosphatidic acid (LPA). This enzyme utilizes acyl-phosphate as fatty acyl donor, but not acyl-CoA or acyl-ACP.</text>
</comment>
<comment type="catalytic activity">
    <reaction evidence="1">
        <text>an acyl phosphate + sn-glycerol 3-phosphate = a 1-acyl-sn-glycero-3-phosphate + phosphate</text>
        <dbReference type="Rhea" id="RHEA:34075"/>
        <dbReference type="ChEBI" id="CHEBI:43474"/>
        <dbReference type="ChEBI" id="CHEBI:57597"/>
        <dbReference type="ChEBI" id="CHEBI:57970"/>
        <dbReference type="ChEBI" id="CHEBI:59918"/>
        <dbReference type="EC" id="2.3.1.275"/>
    </reaction>
</comment>
<comment type="pathway">
    <text evidence="1">Lipid metabolism; phospholipid metabolism.</text>
</comment>
<comment type="subunit">
    <text evidence="1">Probably interacts with PlsX.</text>
</comment>
<comment type="subcellular location">
    <subcellularLocation>
        <location evidence="1">Cell inner membrane</location>
        <topology evidence="1">Multi-pass membrane protein</topology>
    </subcellularLocation>
</comment>
<comment type="similarity">
    <text evidence="1">Belongs to the PlsY family.</text>
</comment>